<evidence type="ECO:0000255" key="1"/>
<evidence type="ECO:0000269" key="2">
    <source>
    </source>
</evidence>
<evidence type="ECO:0000269" key="3">
    <source>
    </source>
</evidence>
<evidence type="ECO:0000269" key="4">
    <source>
    </source>
</evidence>
<evidence type="ECO:0000303" key="5">
    <source>
    </source>
</evidence>
<evidence type="ECO:0000303" key="6">
    <source>
    </source>
</evidence>
<evidence type="ECO:0000305" key="7"/>
<evidence type="ECO:0000312" key="8">
    <source>
        <dbReference type="FlyBase" id="FBgn0034329"/>
    </source>
</evidence>
<comment type="function">
    <text evidence="2 3 4">Secreted immune-induced peptide induced by Toll signaling (PubMed:25915418, PubMed:29920489, PubMed:9736738). Has a role in resistance to bacterial and fungal infections (PubMed:25915418, PubMed:29920489, PubMed:9736738). Has no activity against the fungus C.glabrata in vitro (PubMed:29920489).</text>
</comment>
<comment type="subcellular location">
    <subcellularLocation>
        <location evidence="3 4">Secreted</location>
    </subcellularLocation>
</comment>
<comment type="tissue specificity">
    <text evidence="3 4">Hemolymph (at protein level).</text>
</comment>
<comment type="induction">
    <text evidence="3 4">By bacterial infection.</text>
</comment>
<comment type="mass spectrometry"/>
<comment type="similarity">
    <text evidence="7">Belongs to the bomanin family.</text>
</comment>
<accession>P82706</accession>
<accession>Q9V8F6</accession>
<gene>
    <name evidence="8" type="primary">BomS1</name>
    <name evidence="5" type="synonym">Bom1</name>
    <name evidence="8" type="synonym">IM1</name>
    <name evidence="8" type="ORF">CG18108</name>
</gene>
<organism>
    <name type="scientific">Drosophila melanogaster</name>
    <name type="common">Fruit fly</name>
    <dbReference type="NCBI Taxonomy" id="7227"/>
    <lineage>
        <taxon>Eukaryota</taxon>
        <taxon>Metazoa</taxon>
        <taxon>Ecdysozoa</taxon>
        <taxon>Arthropoda</taxon>
        <taxon>Hexapoda</taxon>
        <taxon>Insecta</taxon>
        <taxon>Pterygota</taxon>
        <taxon>Neoptera</taxon>
        <taxon>Endopterygota</taxon>
        <taxon>Diptera</taxon>
        <taxon>Brachycera</taxon>
        <taxon>Muscomorpha</taxon>
        <taxon>Ephydroidea</taxon>
        <taxon>Drosophilidae</taxon>
        <taxon>Drosophila</taxon>
        <taxon>Sophophora</taxon>
    </lineage>
</organism>
<feature type="signal peptide" evidence="1">
    <location>
        <begin position="1"/>
        <end position="20"/>
    </location>
</feature>
<feature type="propeptide" id="PRO_0000021488" description="Removed by a dipeptidylpeptidase" evidence="4">
    <location>
        <begin position="21"/>
        <end position="27"/>
    </location>
</feature>
<feature type="peptide" id="PRO_0000021489" description="Bomanin Short 1">
    <location>
        <begin position="28"/>
        <end position="43"/>
    </location>
</feature>
<feature type="modified residue" description="Glycine amide" evidence="4">
    <location>
        <position position="43"/>
    </location>
</feature>
<feature type="disulfide bond" evidence="4">
    <location>
        <begin position="36"/>
        <end position="39"/>
    </location>
</feature>
<reference key="1">
    <citation type="journal article" date="2000" name="Science">
        <title>The genome sequence of Drosophila melanogaster.</title>
        <authorList>
            <person name="Adams M.D."/>
            <person name="Celniker S.E."/>
            <person name="Holt R.A."/>
            <person name="Evans C.A."/>
            <person name="Gocayne J.D."/>
            <person name="Amanatides P.G."/>
            <person name="Scherer S.E."/>
            <person name="Li P.W."/>
            <person name="Hoskins R.A."/>
            <person name="Galle R.F."/>
            <person name="George R.A."/>
            <person name="Lewis S.E."/>
            <person name="Richards S."/>
            <person name="Ashburner M."/>
            <person name="Henderson S.N."/>
            <person name="Sutton G.G."/>
            <person name="Wortman J.R."/>
            <person name="Yandell M.D."/>
            <person name="Zhang Q."/>
            <person name="Chen L.X."/>
            <person name="Brandon R.C."/>
            <person name="Rogers Y.-H.C."/>
            <person name="Blazej R.G."/>
            <person name="Champe M."/>
            <person name="Pfeiffer B.D."/>
            <person name="Wan K.H."/>
            <person name="Doyle C."/>
            <person name="Baxter E.G."/>
            <person name="Helt G."/>
            <person name="Nelson C.R."/>
            <person name="Miklos G.L.G."/>
            <person name="Abril J.F."/>
            <person name="Agbayani A."/>
            <person name="An H.-J."/>
            <person name="Andrews-Pfannkoch C."/>
            <person name="Baldwin D."/>
            <person name="Ballew R.M."/>
            <person name="Basu A."/>
            <person name="Baxendale J."/>
            <person name="Bayraktaroglu L."/>
            <person name="Beasley E.M."/>
            <person name="Beeson K.Y."/>
            <person name="Benos P.V."/>
            <person name="Berman B.P."/>
            <person name="Bhandari D."/>
            <person name="Bolshakov S."/>
            <person name="Borkova D."/>
            <person name="Botchan M.R."/>
            <person name="Bouck J."/>
            <person name="Brokstein P."/>
            <person name="Brottier P."/>
            <person name="Burtis K.C."/>
            <person name="Busam D.A."/>
            <person name="Butler H."/>
            <person name="Cadieu E."/>
            <person name="Center A."/>
            <person name="Chandra I."/>
            <person name="Cherry J.M."/>
            <person name="Cawley S."/>
            <person name="Dahlke C."/>
            <person name="Davenport L.B."/>
            <person name="Davies P."/>
            <person name="de Pablos B."/>
            <person name="Delcher A."/>
            <person name="Deng Z."/>
            <person name="Mays A.D."/>
            <person name="Dew I."/>
            <person name="Dietz S.M."/>
            <person name="Dodson K."/>
            <person name="Doup L.E."/>
            <person name="Downes M."/>
            <person name="Dugan-Rocha S."/>
            <person name="Dunkov B.C."/>
            <person name="Dunn P."/>
            <person name="Durbin K.J."/>
            <person name="Evangelista C.C."/>
            <person name="Ferraz C."/>
            <person name="Ferriera S."/>
            <person name="Fleischmann W."/>
            <person name="Fosler C."/>
            <person name="Gabrielian A.E."/>
            <person name="Garg N.S."/>
            <person name="Gelbart W.M."/>
            <person name="Glasser K."/>
            <person name="Glodek A."/>
            <person name="Gong F."/>
            <person name="Gorrell J.H."/>
            <person name="Gu Z."/>
            <person name="Guan P."/>
            <person name="Harris M."/>
            <person name="Harris N.L."/>
            <person name="Harvey D.A."/>
            <person name="Heiman T.J."/>
            <person name="Hernandez J.R."/>
            <person name="Houck J."/>
            <person name="Hostin D."/>
            <person name="Houston K.A."/>
            <person name="Howland T.J."/>
            <person name="Wei M.-H."/>
            <person name="Ibegwam C."/>
            <person name="Jalali M."/>
            <person name="Kalush F."/>
            <person name="Karpen G.H."/>
            <person name="Ke Z."/>
            <person name="Kennison J.A."/>
            <person name="Ketchum K.A."/>
            <person name="Kimmel B.E."/>
            <person name="Kodira C.D."/>
            <person name="Kraft C.L."/>
            <person name="Kravitz S."/>
            <person name="Kulp D."/>
            <person name="Lai Z."/>
            <person name="Lasko P."/>
            <person name="Lei Y."/>
            <person name="Levitsky A.A."/>
            <person name="Li J.H."/>
            <person name="Li Z."/>
            <person name="Liang Y."/>
            <person name="Lin X."/>
            <person name="Liu X."/>
            <person name="Mattei B."/>
            <person name="McIntosh T.C."/>
            <person name="McLeod M.P."/>
            <person name="McPherson D."/>
            <person name="Merkulov G."/>
            <person name="Milshina N.V."/>
            <person name="Mobarry C."/>
            <person name="Morris J."/>
            <person name="Moshrefi A."/>
            <person name="Mount S.M."/>
            <person name="Moy M."/>
            <person name="Murphy B."/>
            <person name="Murphy L."/>
            <person name="Muzny D.M."/>
            <person name="Nelson D.L."/>
            <person name="Nelson D.R."/>
            <person name="Nelson K.A."/>
            <person name="Nixon K."/>
            <person name="Nusskern D.R."/>
            <person name="Pacleb J.M."/>
            <person name="Palazzolo M."/>
            <person name="Pittman G.S."/>
            <person name="Pan S."/>
            <person name="Pollard J."/>
            <person name="Puri V."/>
            <person name="Reese M.G."/>
            <person name="Reinert K."/>
            <person name="Remington K."/>
            <person name="Saunders R.D.C."/>
            <person name="Scheeler F."/>
            <person name="Shen H."/>
            <person name="Shue B.C."/>
            <person name="Siden-Kiamos I."/>
            <person name="Simpson M."/>
            <person name="Skupski M.P."/>
            <person name="Smith T.J."/>
            <person name="Spier E."/>
            <person name="Spradling A.C."/>
            <person name="Stapleton M."/>
            <person name="Strong R."/>
            <person name="Sun E."/>
            <person name="Svirskas R."/>
            <person name="Tector C."/>
            <person name="Turner R."/>
            <person name="Venter E."/>
            <person name="Wang A.H."/>
            <person name="Wang X."/>
            <person name="Wang Z.-Y."/>
            <person name="Wassarman D.A."/>
            <person name="Weinstock G.M."/>
            <person name="Weissenbach J."/>
            <person name="Williams S.M."/>
            <person name="Woodage T."/>
            <person name="Worley K.C."/>
            <person name="Wu D."/>
            <person name="Yang S."/>
            <person name="Yao Q.A."/>
            <person name="Ye J."/>
            <person name="Yeh R.-F."/>
            <person name="Zaveri J.S."/>
            <person name="Zhan M."/>
            <person name="Zhang G."/>
            <person name="Zhao Q."/>
            <person name="Zheng L."/>
            <person name="Zheng X.H."/>
            <person name="Zhong F.N."/>
            <person name="Zhong W."/>
            <person name="Zhou X."/>
            <person name="Zhu S.C."/>
            <person name="Zhu X."/>
            <person name="Smith H.O."/>
            <person name="Gibbs R.A."/>
            <person name="Myers E.W."/>
            <person name="Rubin G.M."/>
            <person name="Venter J.C."/>
        </authorList>
    </citation>
    <scope>NUCLEOTIDE SEQUENCE [LARGE SCALE GENOMIC DNA]</scope>
    <source>
        <strain>Berkeley</strain>
    </source>
</reference>
<reference key="2">
    <citation type="journal article" date="2002" name="Genome Biol.">
        <title>Annotation of the Drosophila melanogaster euchromatic genome: a systematic review.</title>
        <authorList>
            <person name="Misra S."/>
            <person name="Crosby M.A."/>
            <person name="Mungall C.J."/>
            <person name="Matthews B.B."/>
            <person name="Campbell K.S."/>
            <person name="Hradecky P."/>
            <person name="Huang Y."/>
            <person name="Kaminker J.S."/>
            <person name="Millburn G.H."/>
            <person name="Prochnik S.E."/>
            <person name="Smith C.D."/>
            <person name="Tupy J.L."/>
            <person name="Whitfield E.J."/>
            <person name="Bayraktaroglu L."/>
            <person name="Berman B.P."/>
            <person name="Bettencourt B.R."/>
            <person name="Celniker S.E."/>
            <person name="de Grey A.D.N.J."/>
            <person name="Drysdale R.A."/>
            <person name="Harris N.L."/>
            <person name="Richter J."/>
            <person name="Russo S."/>
            <person name="Schroeder A.J."/>
            <person name="Shu S.Q."/>
            <person name="Stapleton M."/>
            <person name="Yamada C."/>
            <person name="Ashburner M."/>
            <person name="Gelbart W.M."/>
            <person name="Rubin G.M."/>
            <person name="Lewis S.E."/>
        </authorList>
    </citation>
    <scope>GENOME REANNOTATION</scope>
    <source>
        <strain>Berkeley</strain>
    </source>
</reference>
<reference key="3">
    <citation type="journal article" date="1998" name="Proc. Natl. Acad. Sci. U.S.A.">
        <title>Differential display of peptides induced during the immune response of Drosophila: a matrix-assisted laser desorption ionization time-of-flight mass spectrometry study.</title>
        <authorList>
            <person name="Uttenweiler-Joseph S."/>
            <person name="Moniatte M."/>
            <person name="Lagueux M."/>
            <person name="van Dorsselaer A."/>
            <person name="Hoffmann J.A."/>
            <person name="Bulet P."/>
        </authorList>
    </citation>
    <scope>PROTEIN SEQUENCE OF 28-43</scope>
    <scope>FUNCTION</scope>
    <scope>SUBCELLULAR LOCATION</scope>
    <scope>TISSUE SPECIFICITY</scope>
    <scope>INDUCTION BY BACTERIA</scope>
    <scope>AMIDATION AT GLY-43</scope>
    <scope>DISULFIDE BOND</scope>
    <scope>MASS SPECTROMETRY</scope>
    <source>
        <strain evidence="6">Oregon-R</strain>
        <tissue evidence="6">Hemolymph</tissue>
    </source>
</reference>
<reference key="4">
    <citation type="journal article" date="2015" name="PLoS Pathog.">
        <title>An effector Peptide family required for Drosophila toll-mediated immunity.</title>
        <authorList>
            <person name="Clemmons A.W."/>
            <person name="Lindsay S.A."/>
            <person name="Wasserman S.A."/>
        </authorList>
    </citation>
    <scope>FUNCTION</scope>
</reference>
<reference key="5">
    <citation type="journal article" date="2018" name="J. Innate Immun.">
        <title>Short-Form Bomanins Mediate Humoral Immunity in Drosophila.</title>
        <authorList>
            <person name="Lindsay S.A."/>
            <person name="Lin S.J.H."/>
            <person name="Wasserman S.A."/>
        </authorList>
    </citation>
    <scope>FUNCTION</scope>
    <scope>SUBCELLULAR LOCATION</scope>
    <scope>TISSUE SPECIFICITY</scope>
    <scope>INDUCTION BY BACTERIA</scope>
</reference>
<proteinExistence type="evidence at protein level"/>
<dbReference type="EMBL" id="AE013599">
    <property type="protein sequence ID" value="AAF57711.1"/>
    <property type="molecule type" value="Genomic_DNA"/>
</dbReference>
<dbReference type="RefSeq" id="NP_611319.1">
    <property type="nucleotide sequence ID" value="NM_137475.3"/>
</dbReference>
<dbReference type="BioGRID" id="62780">
    <property type="interactions" value="4"/>
</dbReference>
<dbReference type="FunCoup" id="P82706">
    <property type="interactions" value="99"/>
</dbReference>
<dbReference type="IntAct" id="P82706">
    <property type="interactions" value="4"/>
</dbReference>
<dbReference type="STRING" id="7227.FBpp0085843"/>
<dbReference type="PaxDb" id="7227-FBpp0085843"/>
<dbReference type="DNASU" id="37100"/>
<dbReference type="EnsemblMetazoa" id="FBtr0086662">
    <property type="protein sequence ID" value="FBpp0085843"/>
    <property type="gene ID" value="FBgn0034329"/>
</dbReference>
<dbReference type="GeneID" id="37100"/>
<dbReference type="KEGG" id="dme:Dmel_CG18108"/>
<dbReference type="AGR" id="FB:FBgn0034329"/>
<dbReference type="CTD" id="37100"/>
<dbReference type="FlyBase" id="FBgn0034329">
    <property type="gene designation" value="BomS1"/>
</dbReference>
<dbReference type="VEuPathDB" id="VectorBase:FBgn0034329"/>
<dbReference type="HOGENOM" id="CLU_204809_0_0_1"/>
<dbReference type="InParanoid" id="P82706"/>
<dbReference type="OrthoDB" id="7805138at2759"/>
<dbReference type="PhylomeDB" id="P82706"/>
<dbReference type="BioGRID-ORCS" id="37100">
    <property type="hits" value="0 hits in 1 CRISPR screen"/>
</dbReference>
<dbReference type="GenomeRNAi" id="37100"/>
<dbReference type="PRO" id="PR:P82706"/>
<dbReference type="Proteomes" id="UP000000803">
    <property type="component" value="Chromosome 2R"/>
</dbReference>
<dbReference type="Bgee" id="FBgn0034329">
    <property type="expression patterns" value="Expressed in capitellum (Drosophila) and 125 other cell types or tissues"/>
</dbReference>
<dbReference type="ExpressionAtlas" id="P82706">
    <property type="expression patterns" value="baseline and differential"/>
</dbReference>
<dbReference type="GO" id="GO:0005576">
    <property type="term" value="C:extracellular region"/>
    <property type="evidence" value="ECO:0000314"/>
    <property type="project" value="UniProtKB"/>
</dbReference>
<dbReference type="GO" id="GO:0019732">
    <property type="term" value="P:antifungal humoral response"/>
    <property type="evidence" value="ECO:0000270"/>
    <property type="project" value="FlyBase"/>
</dbReference>
<dbReference type="GO" id="GO:0006952">
    <property type="term" value="P:defense response"/>
    <property type="evidence" value="ECO:0000314"/>
    <property type="project" value="UniProtKB"/>
</dbReference>
<dbReference type="GO" id="GO:0045087">
    <property type="term" value="P:innate immune response"/>
    <property type="evidence" value="ECO:0007669"/>
    <property type="project" value="UniProtKB-KW"/>
</dbReference>
<dbReference type="GO" id="GO:0009617">
    <property type="term" value="P:response to bacterium"/>
    <property type="evidence" value="ECO:0007007"/>
    <property type="project" value="FlyBase"/>
</dbReference>
<dbReference type="GO" id="GO:0010046">
    <property type="term" value="P:response to mycotoxin"/>
    <property type="evidence" value="ECO:0000315"/>
    <property type="project" value="FlyBase"/>
</dbReference>
<dbReference type="InterPro" id="IPR013172">
    <property type="entry name" value="Bomanin"/>
</dbReference>
<dbReference type="Pfam" id="PF08194">
    <property type="entry name" value="DIM"/>
    <property type="match status" value="1"/>
</dbReference>
<name>BM01_DROME</name>
<sequence>MKFFSVVTVFVLGLLAVANAVPLSPDPGNVIINGDCRVCNVHGGK</sequence>
<keyword id="KW-0027">Amidation</keyword>
<keyword id="KW-0903">Direct protein sequencing</keyword>
<keyword id="KW-1015">Disulfide bond</keyword>
<keyword id="KW-0391">Immunity</keyword>
<keyword id="KW-0399">Innate immunity</keyword>
<keyword id="KW-1185">Reference proteome</keyword>
<keyword id="KW-0964">Secreted</keyword>
<keyword id="KW-0732">Signal</keyword>
<protein>
    <recommendedName>
        <fullName evidence="8">Bomanin Short 1</fullName>
    </recommendedName>
    <alternativeName>
        <fullName evidence="5">Bomanin-1</fullName>
    </alternativeName>
    <alternativeName>
        <fullName evidence="8">Immune-induced peptide 1</fullName>
        <shortName evidence="5 8">DIM-1</shortName>
    </alternativeName>
</protein>